<name>ST4A1_HUMAN</name>
<feature type="chain" id="PRO_0000085167" description="Sulfotransferase 4A1">
    <location>
        <begin position="1"/>
        <end position="284"/>
    </location>
</feature>
<feature type="modified residue" description="Phosphothreonine" evidence="2">
    <location>
        <position position="8"/>
    </location>
</feature>
<feature type="modified residue" description="Phosphothreonine" evidence="2">
    <location>
        <position position="11"/>
    </location>
</feature>
<feature type="modified residue" description="Phosphothreonine" evidence="9">
    <location>
        <position position="205"/>
    </location>
</feature>
<feature type="splice variant" id="VSP_006304" description="In isoform 2." evidence="6 7">
    <original>GRVGLWKDIFTVSMNEKFDLVYKQKMGKCDLTFDFYL</original>
    <variation>AHCVFARKIFLSW</variation>
    <location>
        <begin position="248"/>
        <end position="284"/>
    </location>
</feature>
<feature type="sequence conflict" description="In Ref. 10; AAH30665." evidence="8" ref="10">
    <original>KS</original>
    <variation>P</variation>
    <location>
        <begin position="55"/>
        <end position="56"/>
    </location>
</feature>
<feature type="sequence conflict" description="In Ref. 10; AAH22459." evidence="8" ref="10">
    <original>N</original>
    <variation>S</variation>
    <location>
        <position position="239"/>
    </location>
</feature>
<feature type="helix" evidence="10">
    <location>
        <begin position="15"/>
        <end position="17"/>
    </location>
</feature>
<feature type="strand" evidence="10">
    <location>
        <begin position="18"/>
        <end position="22"/>
    </location>
</feature>
<feature type="strand" evidence="10">
    <location>
        <begin position="25"/>
        <end position="27"/>
    </location>
</feature>
<feature type="helix" evidence="10">
    <location>
        <begin position="29"/>
        <end position="31"/>
    </location>
</feature>
<feature type="helix" evidence="10">
    <location>
        <begin position="35"/>
        <end position="39"/>
    </location>
</feature>
<feature type="strand" evidence="10">
    <location>
        <begin position="48"/>
        <end position="52"/>
    </location>
</feature>
<feature type="helix" evidence="10">
    <location>
        <begin position="59"/>
        <end position="68"/>
    </location>
</feature>
<feature type="strand" evidence="10">
    <location>
        <begin position="91"/>
        <end position="94"/>
    </location>
</feature>
<feature type="helix" evidence="10">
    <location>
        <begin position="96"/>
        <end position="101"/>
    </location>
</feature>
<feature type="strand" evidence="10">
    <location>
        <begin position="107"/>
        <end position="110"/>
    </location>
</feature>
<feature type="helix" evidence="10">
    <location>
        <begin position="114"/>
        <end position="116"/>
    </location>
</feature>
<feature type="helix" evidence="10">
    <location>
        <begin position="119"/>
        <end position="122"/>
    </location>
</feature>
<feature type="strand" evidence="10">
    <location>
        <begin position="126"/>
        <end position="132"/>
    </location>
</feature>
<feature type="helix" evidence="10">
    <location>
        <begin position="135"/>
        <end position="144"/>
    </location>
</feature>
<feature type="helix" evidence="10">
    <location>
        <begin position="158"/>
        <end position="166"/>
    </location>
</feature>
<feature type="helix" evidence="10">
    <location>
        <begin position="175"/>
        <end position="183"/>
    </location>
</feature>
<feature type="turn" evidence="10">
    <location>
        <begin position="184"/>
        <end position="187"/>
    </location>
</feature>
<feature type="strand" evidence="10">
    <location>
        <begin position="191"/>
        <end position="195"/>
    </location>
</feature>
<feature type="helix" evidence="10">
    <location>
        <begin position="198"/>
        <end position="201"/>
    </location>
</feature>
<feature type="helix" evidence="10">
    <location>
        <begin position="203"/>
        <end position="213"/>
    </location>
</feature>
<feature type="helix" evidence="10">
    <location>
        <begin position="220"/>
        <end position="235"/>
    </location>
</feature>
<feature type="strand" evidence="10">
    <location>
        <begin position="242"/>
        <end position="246"/>
    </location>
</feature>
<feature type="helix" evidence="10">
    <location>
        <begin position="252"/>
        <end position="255"/>
    </location>
</feature>
<feature type="helix" evidence="10">
    <location>
        <begin position="259"/>
        <end position="273"/>
    </location>
</feature>
<reference key="1">
    <citation type="journal article" date="2000" name="Biochem. J.">
        <title>Molecular cloning and expression of novel sulphotransferase-like cDNAs from human and rat brain.</title>
        <authorList>
            <person name="Falany C.N."/>
            <person name="Xie X."/>
            <person name="Wang J."/>
            <person name="Ferrer J."/>
            <person name="Falany J.L."/>
        </authorList>
    </citation>
    <scope>NUCLEOTIDE SEQUENCE [MRNA] (ISOFORM 1)</scope>
    <scope>CHARACTERIZATION</scope>
    <source>
        <tissue>Brain</tissue>
    </source>
</reference>
<reference key="2">
    <citation type="journal article" date="2002" name="Gene">
        <title>Highly conserved mouse and human brain sulfotransferases: molecular cloning, expression, and functional characterization.</title>
        <authorList>
            <person name="Sakakibara Y."/>
            <person name="Suiko M."/>
            <person name="Pai T.G."/>
            <person name="Nakayama T."/>
            <person name="Takami Y."/>
            <person name="Katafuchi J."/>
            <person name="Liu M.-C."/>
        </authorList>
    </citation>
    <scope>NUCLEOTIDE SEQUENCE [MRNA] (ISOFORM 1)</scope>
    <scope>CHARACTERIZATION</scope>
    <source>
        <tissue>Brain</tissue>
    </source>
</reference>
<reference key="3">
    <citation type="submission" date="1999-08" db="EMBL/GenBank/DDBJ databases">
        <title>Molecular identification of a human nervous system cytoplasmic sulfotransferase, NST.</title>
        <authorList>
            <person name="Martin S.C."/>
            <person name="Farb D.H."/>
        </authorList>
    </citation>
    <scope>NUCLEOTIDE SEQUENCE (ISOFORM 1)</scope>
    <source>
        <tissue>Brain</tissue>
    </source>
</reference>
<reference key="4">
    <citation type="submission" date="2000-03" db="EMBL/GenBank/DDBJ databases">
        <title>Molecular and physical characterization of human SULT4A1, representing a novel cytosolic sulfotransferase 1 family.</title>
        <authorList>
            <person name="Walther S.E."/>
            <person name="Raftogianis R.B."/>
        </authorList>
    </citation>
    <scope>NUCLEOTIDE SEQUENCE (ISOFORM 1)</scope>
    <source>
        <tissue>Brain</tissue>
    </source>
</reference>
<reference key="5">
    <citation type="journal article" date="2003" name="Genome Res.">
        <title>Reevaluating human gene annotation: a second-generation analysis of chromosome 22.</title>
        <authorList>
            <person name="Collins J.E."/>
            <person name="Goward M.E."/>
            <person name="Cole C.G."/>
            <person name="Smink L.J."/>
            <person name="Huckle E.J."/>
            <person name="Knowles S."/>
            <person name="Bye J.M."/>
            <person name="Beare D.M."/>
            <person name="Dunham I."/>
        </authorList>
    </citation>
    <scope>NUCLEOTIDE SEQUENCE [LARGE SCALE MRNA] (ISOFORM 2)</scope>
    <source>
        <tissue>Testis</tissue>
    </source>
</reference>
<reference key="6">
    <citation type="journal article" date="2004" name="Genome Biol.">
        <title>A genome annotation-driven approach to cloning the human ORFeome.</title>
        <authorList>
            <person name="Collins J.E."/>
            <person name="Wright C.L."/>
            <person name="Edwards C.A."/>
            <person name="Davis M.P."/>
            <person name="Grinham J.A."/>
            <person name="Cole C.G."/>
            <person name="Goward M.E."/>
            <person name="Aguado B."/>
            <person name="Mallya M."/>
            <person name="Mokrab Y."/>
            <person name="Huckle E.J."/>
            <person name="Beare D.M."/>
            <person name="Dunham I."/>
        </authorList>
    </citation>
    <scope>NUCLEOTIDE SEQUENCE [LARGE SCALE MRNA] (ISOFORM 1)</scope>
</reference>
<reference key="7">
    <citation type="journal article" date="2004" name="Nat. Genet.">
        <title>Complete sequencing and characterization of 21,243 full-length human cDNAs.</title>
        <authorList>
            <person name="Ota T."/>
            <person name="Suzuki Y."/>
            <person name="Nishikawa T."/>
            <person name="Otsuki T."/>
            <person name="Sugiyama T."/>
            <person name="Irie R."/>
            <person name="Wakamatsu A."/>
            <person name="Hayashi K."/>
            <person name="Sato H."/>
            <person name="Nagai K."/>
            <person name="Kimura K."/>
            <person name="Makita H."/>
            <person name="Sekine M."/>
            <person name="Obayashi M."/>
            <person name="Nishi T."/>
            <person name="Shibahara T."/>
            <person name="Tanaka T."/>
            <person name="Ishii S."/>
            <person name="Yamamoto J."/>
            <person name="Saito K."/>
            <person name="Kawai Y."/>
            <person name="Isono Y."/>
            <person name="Nakamura Y."/>
            <person name="Nagahari K."/>
            <person name="Murakami K."/>
            <person name="Yasuda T."/>
            <person name="Iwayanagi T."/>
            <person name="Wagatsuma M."/>
            <person name="Shiratori A."/>
            <person name="Sudo H."/>
            <person name="Hosoiri T."/>
            <person name="Kaku Y."/>
            <person name="Kodaira H."/>
            <person name="Kondo H."/>
            <person name="Sugawara M."/>
            <person name="Takahashi M."/>
            <person name="Kanda K."/>
            <person name="Yokoi T."/>
            <person name="Furuya T."/>
            <person name="Kikkawa E."/>
            <person name="Omura Y."/>
            <person name="Abe K."/>
            <person name="Kamihara K."/>
            <person name="Katsuta N."/>
            <person name="Sato K."/>
            <person name="Tanikawa M."/>
            <person name="Yamazaki M."/>
            <person name="Ninomiya K."/>
            <person name="Ishibashi T."/>
            <person name="Yamashita H."/>
            <person name="Murakawa K."/>
            <person name="Fujimori K."/>
            <person name="Tanai H."/>
            <person name="Kimata M."/>
            <person name="Watanabe M."/>
            <person name="Hiraoka S."/>
            <person name="Chiba Y."/>
            <person name="Ishida S."/>
            <person name="Ono Y."/>
            <person name="Takiguchi S."/>
            <person name="Watanabe S."/>
            <person name="Yosida M."/>
            <person name="Hotuta T."/>
            <person name="Kusano J."/>
            <person name="Kanehori K."/>
            <person name="Takahashi-Fujii A."/>
            <person name="Hara H."/>
            <person name="Tanase T.-O."/>
            <person name="Nomura Y."/>
            <person name="Togiya S."/>
            <person name="Komai F."/>
            <person name="Hara R."/>
            <person name="Takeuchi K."/>
            <person name="Arita M."/>
            <person name="Imose N."/>
            <person name="Musashino K."/>
            <person name="Yuuki H."/>
            <person name="Oshima A."/>
            <person name="Sasaki N."/>
            <person name="Aotsuka S."/>
            <person name="Yoshikawa Y."/>
            <person name="Matsunawa H."/>
            <person name="Ichihara T."/>
            <person name="Shiohata N."/>
            <person name="Sano S."/>
            <person name="Moriya S."/>
            <person name="Momiyama H."/>
            <person name="Satoh N."/>
            <person name="Takami S."/>
            <person name="Terashima Y."/>
            <person name="Suzuki O."/>
            <person name="Nakagawa S."/>
            <person name="Senoh A."/>
            <person name="Mizoguchi H."/>
            <person name="Goto Y."/>
            <person name="Shimizu F."/>
            <person name="Wakebe H."/>
            <person name="Hishigaki H."/>
            <person name="Watanabe T."/>
            <person name="Sugiyama A."/>
            <person name="Takemoto M."/>
            <person name="Kawakami B."/>
            <person name="Yamazaki M."/>
            <person name="Watanabe K."/>
            <person name="Kumagai A."/>
            <person name="Itakura S."/>
            <person name="Fukuzumi Y."/>
            <person name="Fujimori Y."/>
            <person name="Komiyama M."/>
            <person name="Tashiro H."/>
            <person name="Tanigami A."/>
            <person name="Fujiwara T."/>
            <person name="Ono T."/>
            <person name="Yamada K."/>
            <person name="Fujii Y."/>
            <person name="Ozaki K."/>
            <person name="Hirao M."/>
            <person name="Ohmori Y."/>
            <person name="Kawabata A."/>
            <person name="Hikiji T."/>
            <person name="Kobatake N."/>
            <person name="Inagaki H."/>
            <person name="Ikema Y."/>
            <person name="Okamoto S."/>
            <person name="Okitani R."/>
            <person name="Kawakami T."/>
            <person name="Noguchi S."/>
            <person name="Itoh T."/>
            <person name="Shigeta K."/>
            <person name="Senba T."/>
            <person name="Matsumura K."/>
            <person name="Nakajima Y."/>
            <person name="Mizuno T."/>
            <person name="Morinaga M."/>
            <person name="Sasaki M."/>
            <person name="Togashi T."/>
            <person name="Oyama M."/>
            <person name="Hata H."/>
            <person name="Watanabe M."/>
            <person name="Komatsu T."/>
            <person name="Mizushima-Sugano J."/>
            <person name="Satoh T."/>
            <person name="Shirai Y."/>
            <person name="Takahashi Y."/>
            <person name="Nakagawa K."/>
            <person name="Okumura K."/>
            <person name="Nagase T."/>
            <person name="Nomura N."/>
            <person name="Kikuchi H."/>
            <person name="Masuho Y."/>
            <person name="Yamashita R."/>
            <person name="Nakai K."/>
            <person name="Yada T."/>
            <person name="Nakamura Y."/>
            <person name="Ohara O."/>
            <person name="Isogai T."/>
            <person name="Sugano S."/>
        </authorList>
    </citation>
    <scope>NUCLEOTIDE SEQUENCE [LARGE SCALE MRNA] (ISOFORM 1)</scope>
    <source>
        <tissue>Brain</tissue>
    </source>
</reference>
<reference key="8">
    <citation type="journal article" date="1999" name="Nature">
        <title>The DNA sequence of human chromosome 22.</title>
        <authorList>
            <person name="Dunham I."/>
            <person name="Hunt A.R."/>
            <person name="Collins J.E."/>
            <person name="Bruskiewich R."/>
            <person name="Beare D.M."/>
            <person name="Clamp M."/>
            <person name="Smink L.J."/>
            <person name="Ainscough R."/>
            <person name="Almeida J.P."/>
            <person name="Babbage A.K."/>
            <person name="Bagguley C."/>
            <person name="Bailey J."/>
            <person name="Barlow K.F."/>
            <person name="Bates K.N."/>
            <person name="Beasley O.P."/>
            <person name="Bird C.P."/>
            <person name="Blakey S.E."/>
            <person name="Bridgeman A.M."/>
            <person name="Buck D."/>
            <person name="Burgess J."/>
            <person name="Burrill W.D."/>
            <person name="Burton J."/>
            <person name="Carder C."/>
            <person name="Carter N.P."/>
            <person name="Chen Y."/>
            <person name="Clark G."/>
            <person name="Clegg S.M."/>
            <person name="Cobley V.E."/>
            <person name="Cole C.G."/>
            <person name="Collier R.E."/>
            <person name="Connor R."/>
            <person name="Conroy D."/>
            <person name="Corby N.R."/>
            <person name="Coville G.J."/>
            <person name="Cox A.V."/>
            <person name="Davis J."/>
            <person name="Dawson E."/>
            <person name="Dhami P.D."/>
            <person name="Dockree C."/>
            <person name="Dodsworth S.J."/>
            <person name="Durbin R.M."/>
            <person name="Ellington A.G."/>
            <person name="Evans K.L."/>
            <person name="Fey J.M."/>
            <person name="Fleming K."/>
            <person name="French L."/>
            <person name="Garner A.A."/>
            <person name="Gilbert J.G.R."/>
            <person name="Goward M.E."/>
            <person name="Grafham D.V."/>
            <person name="Griffiths M.N.D."/>
            <person name="Hall C."/>
            <person name="Hall R.E."/>
            <person name="Hall-Tamlyn G."/>
            <person name="Heathcott R.W."/>
            <person name="Ho S."/>
            <person name="Holmes S."/>
            <person name="Hunt S.E."/>
            <person name="Jones M.C."/>
            <person name="Kershaw J."/>
            <person name="Kimberley A.M."/>
            <person name="King A."/>
            <person name="Laird G.K."/>
            <person name="Langford C.F."/>
            <person name="Leversha M.A."/>
            <person name="Lloyd C."/>
            <person name="Lloyd D.M."/>
            <person name="Martyn I.D."/>
            <person name="Mashreghi-Mohammadi M."/>
            <person name="Matthews L.H."/>
            <person name="Mccann O.T."/>
            <person name="Mcclay J."/>
            <person name="Mclaren S."/>
            <person name="McMurray A.A."/>
            <person name="Milne S.A."/>
            <person name="Mortimore B.J."/>
            <person name="Odell C.N."/>
            <person name="Pavitt R."/>
            <person name="Pearce A.V."/>
            <person name="Pearson D."/>
            <person name="Phillimore B.J.C.T."/>
            <person name="Phillips S.H."/>
            <person name="Plumb R.W."/>
            <person name="Ramsay H."/>
            <person name="Ramsey Y."/>
            <person name="Rogers L."/>
            <person name="Ross M.T."/>
            <person name="Scott C.E."/>
            <person name="Sehra H.K."/>
            <person name="Skuce C.D."/>
            <person name="Smalley S."/>
            <person name="Smith M.L."/>
            <person name="Soderlund C."/>
            <person name="Spragon L."/>
            <person name="Steward C.A."/>
            <person name="Sulston J.E."/>
            <person name="Swann R.M."/>
            <person name="Vaudin M."/>
            <person name="Wall M."/>
            <person name="Wallis J.M."/>
            <person name="Whiteley M.N."/>
            <person name="Willey D.L."/>
            <person name="Williams L."/>
            <person name="Williams S.A."/>
            <person name="Williamson H."/>
            <person name="Wilmer T.E."/>
            <person name="Wilming L."/>
            <person name="Wright C.L."/>
            <person name="Hubbard T."/>
            <person name="Bentley D.R."/>
            <person name="Beck S."/>
            <person name="Rogers J."/>
            <person name="Shimizu N."/>
            <person name="Minoshima S."/>
            <person name="Kawasaki K."/>
            <person name="Sasaki T."/>
            <person name="Asakawa S."/>
            <person name="Kudoh J."/>
            <person name="Shintani A."/>
            <person name="Shibuya K."/>
            <person name="Yoshizaki Y."/>
            <person name="Aoki N."/>
            <person name="Mitsuyama S."/>
            <person name="Roe B.A."/>
            <person name="Chen F."/>
            <person name="Chu L."/>
            <person name="Crabtree J."/>
            <person name="Deschamps S."/>
            <person name="Do A."/>
            <person name="Do T."/>
            <person name="Dorman A."/>
            <person name="Fang F."/>
            <person name="Fu Y."/>
            <person name="Hu P."/>
            <person name="Hua A."/>
            <person name="Kenton S."/>
            <person name="Lai H."/>
            <person name="Lao H.I."/>
            <person name="Lewis J."/>
            <person name="Lewis S."/>
            <person name="Lin S.-P."/>
            <person name="Loh P."/>
            <person name="Malaj E."/>
            <person name="Nguyen T."/>
            <person name="Pan H."/>
            <person name="Phan S."/>
            <person name="Qi S."/>
            <person name="Qian Y."/>
            <person name="Ray L."/>
            <person name="Ren Q."/>
            <person name="Shaull S."/>
            <person name="Sloan D."/>
            <person name="Song L."/>
            <person name="Wang Q."/>
            <person name="Wang Y."/>
            <person name="Wang Z."/>
            <person name="White J."/>
            <person name="Willingham D."/>
            <person name="Wu H."/>
            <person name="Yao Z."/>
            <person name="Zhan M."/>
            <person name="Zhang G."/>
            <person name="Chissoe S."/>
            <person name="Murray J."/>
            <person name="Miller N."/>
            <person name="Minx P."/>
            <person name="Fulton R."/>
            <person name="Johnson D."/>
            <person name="Bemis G."/>
            <person name="Bentley D."/>
            <person name="Bradshaw H."/>
            <person name="Bourne S."/>
            <person name="Cordes M."/>
            <person name="Du Z."/>
            <person name="Fulton L."/>
            <person name="Goela D."/>
            <person name="Graves T."/>
            <person name="Hawkins J."/>
            <person name="Hinds K."/>
            <person name="Kemp K."/>
            <person name="Latreille P."/>
            <person name="Layman D."/>
            <person name="Ozersky P."/>
            <person name="Rohlfing T."/>
            <person name="Scheet P."/>
            <person name="Walker C."/>
            <person name="Wamsley A."/>
            <person name="Wohldmann P."/>
            <person name="Pepin K."/>
            <person name="Nelson J."/>
            <person name="Korf I."/>
            <person name="Bedell J.A."/>
            <person name="Hillier L.W."/>
            <person name="Mardis E."/>
            <person name="Waterston R."/>
            <person name="Wilson R."/>
            <person name="Emanuel B.S."/>
            <person name="Shaikh T."/>
            <person name="Kurahashi H."/>
            <person name="Saitta S."/>
            <person name="Budarf M.L."/>
            <person name="McDermid H.E."/>
            <person name="Johnson A."/>
            <person name="Wong A.C.C."/>
            <person name="Morrow B.E."/>
            <person name="Edelmann L."/>
            <person name="Kim U.J."/>
            <person name="Shizuya H."/>
            <person name="Simon M.I."/>
            <person name="Dumanski J.P."/>
            <person name="Peyrard M."/>
            <person name="Kedra D."/>
            <person name="Seroussi E."/>
            <person name="Fransson I."/>
            <person name="Tapia I."/>
            <person name="Bruder C.E."/>
            <person name="O'Brien K.P."/>
            <person name="Wilkinson P."/>
            <person name="Bodenteich A."/>
            <person name="Hartman K."/>
            <person name="Hu X."/>
            <person name="Khan A.S."/>
            <person name="Lane L."/>
            <person name="Tilahun Y."/>
            <person name="Wright H."/>
        </authorList>
    </citation>
    <scope>NUCLEOTIDE SEQUENCE [LARGE SCALE GENOMIC DNA]</scope>
</reference>
<reference key="9">
    <citation type="submission" date="2005-07" db="EMBL/GenBank/DDBJ databases">
        <authorList>
            <person name="Mural R.J."/>
            <person name="Istrail S."/>
            <person name="Sutton G.G."/>
            <person name="Florea L."/>
            <person name="Halpern A.L."/>
            <person name="Mobarry C.M."/>
            <person name="Lippert R."/>
            <person name="Walenz B."/>
            <person name="Shatkay H."/>
            <person name="Dew I."/>
            <person name="Miller J.R."/>
            <person name="Flanigan M.J."/>
            <person name="Edwards N.J."/>
            <person name="Bolanos R."/>
            <person name="Fasulo D."/>
            <person name="Halldorsson B.V."/>
            <person name="Hannenhalli S."/>
            <person name="Turner R."/>
            <person name="Yooseph S."/>
            <person name="Lu F."/>
            <person name="Nusskern D.R."/>
            <person name="Shue B.C."/>
            <person name="Zheng X.H."/>
            <person name="Zhong F."/>
            <person name="Delcher A.L."/>
            <person name="Huson D.H."/>
            <person name="Kravitz S.A."/>
            <person name="Mouchard L."/>
            <person name="Reinert K."/>
            <person name="Remington K.A."/>
            <person name="Clark A.G."/>
            <person name="Waterman M.S."/>
            <person name="Eichler E.E."/>
            <person name="Adams M.D."/>
            <person name="Hunkapiller M.W."/>
            <person name="Myers E.W."/>
            <person name="Venter J.C."/>
        </authorList>
    </citation>
    <scope>NUCLEOTIDE SEQUENCE [LARGE SCALE GENOMIC DNA]</scope>
</reference>
<reference key="10">
    <citation type="journal article" date="2004" name="Genome Res.">
        <title>The status, quality, and expansion of the NIH full-length cDNA project: the Mammalian Gene Collection (MGC).</title>
        <authorList>
            <consortium name="The MGC Project Team"/>
        </authorList>
    </citation>
    <scope>NUCLEOTIDE SEQUENCE [LARGE SCALE MRNA] (ISOFORMS 1 AND 2)</scope>
    <source>
        <tissue>Fetal brain</tissue>
        <tissue>Hippocampus</tissue>
        <tissue>Hypothalamus</tissue>
    </source>
</reference>
<reference key="11">
    <citation type="journal article" date="2009" name="Sci. Signal.">
        <title>Quantitative phosphoproteomic analysis of T cell receptor signaling reveals system-wide modulation of protein-protein interactions.</title>
        <authorList>
            <person name="Mayya V."/>
            <person name="Lundgren D.H."/>
            <person name="Hwang S.-I."/>
            <person name="Rezaul K."/>
            <person name="Wu L."/>
            <person name="Eng J.K."/>
            <person name="Rodionov V."/>
            <person name="Han D.K."/>
        </authorList>
    </citation>
    <scope>PHOSPHORYLATION [LARGE SCALE ANALYSIS] AT THR-205</scope>
    <scope>IDENTIFICATION BY MASS SPECTROMETRY [LARGE SCALE ANALYSIS]</scope>
    <source>
        <tissue>Leukemic T-cell</tissue>
    </source>
</reference>
<reference key="12">
    <citation type="journal article" date="2007" name="PLoS Biol.">
        <title>Structural and chemical profiling of the human cytosolic sulfotransferases.</title>
        <authorList>
            <person name="Allali-Hassani A."/>
            <person name="Pan P.W."/>
            <person name="Dombrovski L."/>
            <person name="Najmanovich R."/>
            <person name="Tempel W."/>
            <person name="Dong A."/>
            <person name="Loppnau P."/>
            <person name="Martin F."/>
            <person name="Thornton J."/>
            <person name="Edwards A.M."/>
            <person name="Bochkarev A."/>
            <person name="Plotnikov A.N."/>
            <person name="Vedadi M."/>
            <person name="Arrowsmith C.H."/>
        </authorList>
    </citation>
    <scope>X-RAY CRYSTALLOGRAPHY (2.24 ANGSTROMS)</scope>
    <scope>FUNCTION</scope>
    <scope>CHARACTERIZATION</scope>
</reference>
<protein>
    <recommendedName>
        <fullName>Sulfotransferase 4A1</fullName>
        <shortName>ST4A1</shortName>
        <ecNumber>2.8.2.-</ecNumber>
    </recommendedName>
    <alternativeName>
        <fullName>Brain sulfotransferase-like protein</fullName>
        <shortName>hBR-STL</shortName>
        <shortName>hBR-STL-1</shortName>
    </alternativeName>
    <alternativeName>
        <fullName>Nervous system sulfotransferase</fullName>
        <shortName>NST</shortName>
    </alternativeName>
</protein>
<keyword id="KW-0002">3D-structure</keyword>
<keyword id="KW-0025">Alternative splicing</keyword>
<keyword id="KW-0963">Cytoplasm</keyword>
<keyword id="KW-0443">Lipid metabolism</keyword>
<keyword id="KW-0597">Phosphoprotein</keyword>
<keyword id="KW-1267">Proteomics identification</keyword>
<keyword id="KW-1185">Reference proteome</keyword>
<keyword id="KW-0753">Steroid metabolism</keyword>
<keyword id="KW-0808">Transferase</keyword>
<organism>
    <name type="scientific">Homo sapiens</name>
    <name type="common">Human</name>
    <dbReference type="NCBI Taxonomy" id="9606"/>
    <lineage>
        <taxon>Eukaryota</taxon>
        <taxon>Metazoa</taxon>
        <taxon>Chordata</taxon>
        <taxon>Craniata</taxon>
        <taxon>Vertebrata</taxon>
        <taxon>Euteleostomi</taxon>
        <taxon>Mammalia</taxon>
        <taxon>Eutheria</taxon>
        <taxon>Euarchontoglires</taxon>
        <taxon>Primates</taxon>
        <taxon>Haplorrhini</taxon>
        <taxon>Catarrhini</taxon>
        <taxon>Hominidae</taxon>
        <taxon>Homo</taxon>
    </lineage>
</organism>
<comment type="function">
    <text evidence="5">Atypical sulfotransferase family member with very low affinity for 3'-phospho-5'-adenylyl sulfate (PAPS) and very low catalytic activity towards L-triiodothyronine, thyroxine, estrone, p-nitrophenol, 2-naphthylamine, and 2-beta-naphthol. May have a role in the metabolism of drugs and neurotransmitters in the CNS.</text>
</comment>
<comment type="interaction">
    <interactant intactId="EBI-6690555">
        <id>Q9BR01</id>
    </interactant>
    <interactant intactId="EBI-21899143">
        <id>Q8N143</id>
        <label>BCL6B</label>
    </interactant>
    <organismsDiffer>false</organismsDiffer>
    <experiments>2</experiments>
</comment>
<comment type="interaction">
    <interactant intactId="EBI-6690555">
        <id>Q9BR01</id>
    </interactant>
    <interactant intactId="EBI-717887">
        <id>Q9UPT6</id>
        <label>MAPK8IP3</label>
    </interactant>
    <organismsDiffer>false</organismsDiffer>
    <experiments>4</experiments>
</comment>
<comment type="interaction">
    <interactant intactId="EBI-6690555">
        <id>Q9BR01</id>
    </interactant>
    <interactant intactId="EBI-714158">
        <id>Q13526</id>
        <label>PIN1</label>
    </interactant>
    <organismsDiffer>false</organismsDiffer>
    <experiments>4</experiments>
</comment>
<comment type="interaction">
    <interactant intactId="EBI-6690555">
        <id>Q9BR01</id>
    </interactant>
    <interactant intactId="EBI-752420">
        <id>Q9NUX5</id>
        <label>POT1</label>
    </interactant>
    <organismsDiffer>false</organismsDiffer>
    <experiments>2</experiments>
</comment>
<comment type="interaction">
    <interactant intactId="EBI-6690555">
        <id>Q9BR01</id>
    </interactant>
    <interactant intactId="EBI-6690555">
        <id>Q9BR01</id>
        <label>SULT4A1</label>
    </interactant>
    <organismsDiffer>false</organismsDiffer>
    <experiments>6</experiments>
</comment>
<comment type="interaction">
    <interactant intactId="EBI-6690555">
        <id>Q9BR01</id>
    </interactant>
    <interactant intactId="EBI-2562368">
        <id>P22735</id>
        <label>TGM1</label>
    </interactant>
    <organismsDiffer>false</organismsDiffer>
    <experiments>3</experiments>
</comment>
<comment type="interaction">
    <interactant intactId="EBI-25831443">
        <id>Q9BR01-2</id>
    </interactant>
    <interactant intactId="EBI-21535880">
        <id>Q92870-2</id>
        <label>APBB2</label>
    </interactant>
    <organismsDiffer>false</organismsDiffer>
    <experiments>3</experiments>
</comment>
<comment type="interaction">
    <interactant intactId="EBI-25831443">
        <id>Q9BR01-2</id>
    </interactant>
    <interactant intactId="EBI-702390">
        <id>Q9UBB4</id>
        <label>ATXN10</label>
    </interactant>
    <organismsDiffer>false</organismsDiffer>
    <experiments>3</experiments>
</comment>
<comment type="interaction">
    <interactant intactId="EBI-25831443">
        <id>Q9BR01-2</id>
    </interactant>
    <interactant intactId="EBI-744302">
        <id>P14136</id>
        <label>GFAP</label>
    </interactant>
    <organismsDiffer>false</organismsDiffer>
    <experiments>3</experiments>
</comment>
<comment type="interaction">
    <interactant intactId="EBI-25831443">
        <id>Q9BR01-2</id>
    </interactant>
    <interactant intactId="EBI-466029">
        <id>P42858</id>
        <label>HTT</label>
    </interactant>
    <organismsDiffer>false</organismsDiffer>
    <experiments>15</experiments>
</comment>
<comment type="interaction">
    <interactant intactId="EBI-25831443">
        <id>Q9BR01-2</id>
    </interactant>
    <interactant intactId="EBI-1055254">
        <id>Q8WXH2</id>
        <label>JPH3</label>
    </interactant>
    <organismsDiffer>false</organismsDiffer>
    <experiments>3</experiments>
</comment>
<comment type="interaction">
    <interactant intactId="EBI-25831443">
        <id>Q9BR01-2</id>
    </interactant>
    <interactant intactId="EBI-713665">
        <id>P19404</id>
        <label>NDUFV2</label>
    </interactant>
    <organismsDiffer>false</organismsDiffer>
    <experiments>3</experiments>
</comment>
<comment type="interaction">
    <interactant intactId="EBI-25831443">
        <id>Q9BR01-2</id>
    </interactant>
    <interactant intactId="EBI-1391623">
        <id>P29474</id>
        <label>NOS3</label>
    </interactant>
    <organismsDiffer>false</organismsDiffer>
    <experiments>3</experiments>
</comment>
<comment type="interaction">
    <interactant intactId="EBI-25831443">
        <id>Q9BR01-2</id>
    </interactant>
    <interactant intactId="EBI-50433196">
        <id>A0A6Q8PF08</id>
        <label>PMP22</label>
    </interactant>
    <organismsDiffer>false</organismsDiffer>
    <experiments>3</experiments>
</comment>
<comment type="interaction">
    <interactant intactId="EBI-25831443">
        <id>Q9BR01-2</id>
    </interactant>
    <interactant intactId="EBI-985879">
        <id>P37840</id>
        <label>SNCA</label>
    </interactant>
    <organismsDiffer>false</organismsDiffer>
    <experiments>3</experiments>
</comment>
<comment type="subcellular location">
    <subcellularLocation>
        <location evidence="1">Cytoplasm</location>
    </subcellularLocation>
</comment>
<comment type="alternative products">
    <event type="alternative splicing"/>
    <isoform>
        <id>Q9BR01-1</id>
        <name>1</name>
        <sequence type="displayed"/>
    </isoform>
    <isoform>
        <id>Q9BR01-2</id>
        <name>2</name>
        <sequence type="described" ref="VSP_006304"/>
    </isoform>
</comment>
<comment type="tissue specificity">
    <text evidence="3 4">Highly expressed in the cerebral cortex and frontal lobe, slightly less in the cerebellum, occipital and temporal lobes, relatively low in the medulla and putamen, and lowest in the spinal cord. No expression detected in the pancreas (PubMed:10698717). Highly expressed in fetal brain and occipital lobe, slightly less in the whole brain, frontal lobe, hippocampus, and lung, very low expression in cerebellum, medulla oblongata, temporal lobe, testis, kidney and appendix (PubMed:12039030).</text>
</comment>
<comment type="similarity">
    <text evidence="8">Belongs to the sulfotransferase 1 family.</text>
</comment>
<proteinExistence type="evidence at protein level"/>
<accession>Q9BR01</accession>
<accession>B2R7N3</accession>
<accession>O43728</accession>
<gene>
    <name type="primary">SULT4A1</name>
    <name type="synonym">SULTX3</name>
</gene>
<dbReference type="EC" id="2.8.2.-"/>
<dbReference type="EMBL" id="AF188698">
    <property type="protein sequence ID" value="AAF61197.1"/>
    <property type="molecule type" value="mRNA"/>
</dbReference>
<dbReference type="EMBL" id="AF115311">
    <property type="protein sequence ID" value="AAF21970.1"/>
    <property type="molecule type" value="mRNA"/>
</dbReference>
<dbReference type="EMBL" id="AF176342">
    <property type="protein sequence ID" value="AAK64595.1"/>
    <property type="molecule type" value="mRNA"/>
</dbReference>
<dbReference type="EMBL" id="AF251263">
    <property type="protein sequence ID" value="AAF98152.1"/>
    <property type="molecule type" value="mRNA"/>
</dbReference>
<dbReference type="EMBL" id="AL590119">
    <property type="protein sequence ID" value="CAC34872.1"/>
    <property type="molecule type" value="mRNA"/>
</dbReference>
<dbReference type="EMBL" id="CR456588">
    <property type="protein sequence ID" value="CAG30474.1"/>
    <property type="molecule type" value="mRNA"/>
</dbReference>
<dbReference type="EMBL" id="AK313048">
    <property type="protein sequence ID" value="BAG35880.1"/>
    <property type="molecule type" value="mRNA"/>
</dbReference>
<dbReference type="EMBL" id="Z97055">
    <property type="status" value="NOT_ANNOTATED_CDS"/>
    <property type="molecule type" value="Genomic_DNA"/>
</dbReference>
<dbReference type="EMBL" id="CH471138">
    <property type="protein sequence ID" value="EAW73320.1"/>
    <property type="molecule type" value="Genomic_DNA"/>
</dbReference>
<dbReference type="EMBL" id="BC022459">
    <property type="protein sequence ID" value="AAH22459.1"/>
    <property type="molecule type" value="mRNA"/>
</dbReference>
<dbReference type="EMBL" id="BC028171">
    <property type="protein sequence ID" value="AAH28171.1"/>
    <property type="molecule type" value="mRNA"/>
</dbReference>
<dbReference type="EMBL" id="BC030665">
    <property type="protein sequence ID" value="AAH30665.1"/>
    <property type="molecule type" value="mRNA"/>
</dbReference>
<dbReference type="CCDS" id="CCDS14051.1">
    <molecule id="Q9BR01-1"/>
</dbReference>
<dbReference type="RefSeq" id="NP_055166.1">
    <molecule id="Q9BR01-1"/>
    <property type="nucleotide sequence ID" value="NM_014351.4"/>
</dbReference>
<dbReference type="RefSeq" id="XP_047297277.1">
    <molecule id="Q9BR01-2"/>
    <property type="nucleotide sequence ID" value="XM_047441321.1"/>
</dbReference>
<dbReference type="RefSeq" id="XP_054181480.1">
    <molecule id="Q9BR01-2"/>
    <property type="nucleotide sequence ID" value="XM_054325505.1"/>
</dbReference>
<dbReference type="PDB" id="1ZD1">
    <property type="method" value="X-ray"/>
    <property type="resolution" value="2.24 A"/>
    <property type="chains" value="A/B=1-284"/>
</dbReference>
<dbReference type="PDBsum" id="1ZD1"/>
<dbReference type="SMR" id="Q9BR01"/>
<dbReference type="BioGRID" id="117358">
    <property type="interactions" value="22"/>
</dbReference>
<dbReference type="FunCoup" id="Q9BR01">
    <property type="interactions" value="561"/>
</dbReference>
<dbReference type="IntAct" id="Q9BR01">
    <property type="interactions" value="25"/>
</dbReference>
<dbReference type="MINT" id="Q9BR01"/>
<dbReference type="STRING" id="9606.ENSP00000332565"/>
<dbReference type="ChEMBL" id="CHEMBL1743298"/>
<dbReference type="DrugBank" id="DB12243">
    <property type="generic name" value="Edaravone"/>
</dbReference>
<dbReference type="DrugBank" id="DB12471">
    <property type="generic name" value="Ibrexafungerp"/>
</dbReference>
<dbReference type="DrugBank" id="DB00968">
    <property type="generic name" value="Methyldopa"/>
</dbReference>
<dbReference type="DrugBank" id="DB00960">
    <property type="generic name" value="Pindolol"/>
</dbReference>
<dbReference type="DrugBank" id="DB00867">
    <property type="generic name" value="Ritodrine"/>
</dbReference>
<dbReference type="DrugBank" id="DB00871">
    <property type="generic name" value="Terbutaline"/>
</dbReference>
<dbReference type="GlyGen" id="Q9BR01">
    <property type="glycosylation" value="1 site, 1 O-linked glycan (1 site)"/>
</dbReference>
<dbReference type="iPTMnet" id="Q9BR01"/>
<dbReference type="PhosphoSitePlus" id="Q9BR01"/>
<dbReference type="BioMuta" id="SULT4A1"/>
<dbReference type="DMDM" id="22096149"/>
<dbReference type="jPOST" id="Q9BR01"/>
<dbReference type="MassIVE" id="Q9BR01"/>
<dbReference type="PaxDb" id="9606-ENSP00000332565"/>
<dbReference type="PeptideAtlas" id="Q9BR01"/>
<dbReference type="ProteomicsDB" id="78733">
    <molecule id="Q9BR01-1"/>
</dbReference>
<dbReference type="ProteomicsDB" id="78734">
    <molecule id="Q9BR01-2"/>
</dbReference>
<dbReference type="Antibodypedia" id="304">
    <property type="antibodies" value="168 antibodies from 24 providers"/>
</dbReference>
<dbReference type="DNASU" id="25830"/>
<dbReference type="Ensembl" id="ENST00000330884.9">
    <molecule id="Q9BR01-1"/>
    <property type="protein sequence ID" value="ENSP00000332565.4"/>
    <property type="gene ID" value="ENSG00000130540.14"/>
</dbReference>
<dbReference type="Ensembl" id="ENST00000422525.1">
    <molecule id="Q9BR01-2"/>
    <property type="protein sequence ID" value="ENSP00000388285.1"/>
    <property type="gene ID" value="ENSG00000130540.14"/>
</dbReference>
<dbReference type="GeneID" id="25830"/>
<dbReference type="KEGG" id="hsa:25830"/>
<dbReference type="MANE-Select" id="ENST00000330884.9">
    <property type="protein sequence ID" value="ENSP00000332565.4"/>
    <property type="RefSeq nucleotide sequence ID" value="NM_014351.4"/>
    <property type="RefSeq protein sequence ID" value="NP_055166.1"/>
</dbReference>
<dbReference type="UCSC" id="uc003bee.2">
    <molecule id="Q9BR01-1"/>
    <property type="organism name" value="human"/>
</dbReference>
<dbReference type="AGR" id="HGNC:14903"/>
<dbReference type="CTD" id="25830"/>
<dbReference type="DisGeNET" id="25830"/>
<dbReference type="GeneCards" id="SULT4A1"/>
<dbReference type="HGNC" id="HGNC:14903">
    <property type="gene designation" value="SULT4A1"/>
</dbReference>
<dbReference type="HPA" id="ENSG00000130540">
    <property type="expression patterns" value="Tissue enriched (brain)"/>
</dbReference>
<dbReference type="MIM" id="608359">
    <property type="type" value="gene"/>
</dbReference>
<dbReference type="neXtProt" id="NX_Q9BR01"/>
<dbReference type="OpenTargets" id="ENSG00000130540"/>
<dbReference type="PharmGKB" id="PA412"/>
<dbReference type="VEuPathDB" id="HostDB:ENSG00000130540"/>
<dbReference type="eggNOG" id="KOG1584">
    <property type="taxonomic scope" value="Eukaryota"/>
</dbReference>
<dbReference type="GeneTree" id="ENSGT00940000158662"/>
<dbReference type="HOGENOM" id="CLU_027239_1_1_1"/>
<dbReference type="InParanoid" id="Q9BR01"/>
<dbReference type="OMA" id="MVESCHQ"/>
<dbReference type="OrthoDB" id="205623at2759"/>
<dbReference type="PAN-GO" id="Q9BR01">
    <property type="GO annotations" value="3 GO annotations based on evolutionary models"/>
</dbReference>
<dbReference type="PhylomeDB" id="Q9BR01"/>
<dbReference type="TreeFam" id="TF321745"/>
<dbReference type="BRENDA" id="2.8.2.1">
    <property type="organism ID" value="2681"/>
</dbReference>
<dbReference type="PathwayCommons" id="Q9BR01"/>
<dbReference type="Reactome" id="R-HSA-156584">
    <property type="pathway name" value="Cytosolic sulfonation of small molecules"/>
</dbReference>
<dbReference type="SignaLink" id="Q9BR01"/>
<dbReference type="SIGNOR" id="Q9BR01"/>
<dbReference type="BioGRID-ORCS" id="25830">
    <property type="hits" value="8 hits in 1145 CRISPR screens"/>
</dbReference>
<dbReference type="EvolutionaryTrace" id="Q9BR01"/>
<dbReference type="GeneWiki" id="SULT4A1"/>
<dbReference type="GenomeRNAi" id="25830"/>
<dbReference type="Pharos" id="Q9BR01">
    <property type="development level" value="Tbio"/>
</dbReference>
<dbReference type="PRO" id="PR:Q9BR01"/>
<dbReference type="Proteomes" id="UP000005640">
    <property type="component" value="Chromosome 22"/>
</dbReference>
<dbReference type="RNAct" id="Q9BR01">
    <property type="molecule type" value="protein"/>
</dbReference>
<dbReference type="Bgee" id="ENSG00000130540">
    <property type="expression patterns" value="Expressed in right frontal lobe and 140 other cell types or tissues"/>
</dbReference>
<dbReference type="ExpressionAtlas" id="Q9BR01">
    <property type="expression patterns" value="baseline and differential"/>
</dbReference>
<dbReference type="GO" id="GO:0005737">
    <property type="term" value="C:cytoplasm"/>
    <property type="evidence" value="ECO:0000318"/>
    <property type="project" value="GO_Central"/>
</dbReference>
<dbReference type="GO" id="GO:0005829">
    <property type="term" value="C:cytosol"/>
    <property type="evidence" value="ECO:0000304"/>
    <property type="project" value="Reactome"/>
</dbReference>
<dbReference type="GO" id="GO:0005739">
    <property type="term" value="C:mitochondrion"/>
    <property type="evidence" value="ECO:0007669"/>
    <property type="project" value="Ensembl"/>
</dbReference>
<dbReference type="GO" id="GO:0042802">
    <property type="term" value="F:identical protein binding"/>
    <property type="evidence" value="ECO:0000314"/>
    <property type="project" value="UniProtKB"/>
</dbReference>
<dbReference type="GO" id="GO:0008146">
    <property type="term" value="F:sulfotransferase activity"/>
    <property type="evidence" value="ECO:0000303"/>
    <property type="project" value="UniProtKB"/>
</dbReference>
<dbReference type="GO" id="GO:0140059">
    <property type="term" value="P:dendrite arborization"/>
    <property type="evidence" value="ECO:0007669"/>
    <property type="project" value="Ensembl"/>
</dbReference>
<dbReference type="GO" id="GO:0008202">
    <property type="term" value="P:steroid metabolic process"/>
    <property type="evidence" value="ECO:0007669"/>
    <property type="project" value="UniProtKB-KW"/>
</dbReference>
<dbReference type="GO" id="GO:0051923">
    <property type="term" value="P:sulfation"/>
    <property type="evidence" value="ECO:0000318"/>
    <property type="project" value="GO_Central"/>
</dbReference>
<dbReference type="FunFam" id="3.40.50.300:FF:001121">
    <property type="entry name" value="Sulfotransferase"/>
    <property type="match status" value="1"/>
</dbReference>
<dbReference type="Gene3D" id="3.40.50.300">
    <property type="entry name" value="P-loop containing nucleotide triphosphate hydrolases"/>
    <property type="match status" value="1"/>
</dbReference>
<dbReference type="InterPro" id="IPR027417">
    <property type="entry name" value="P-loop_NTPase"/>
</dbReference>
<dbReference type="InterPro" id="IPR000863">
    <property type="entry name" value="Sulfotransferase_dom"/>
</dbReference>
<dbReference type="PANTHER" id="PTHR11783">
    <property type="entry name" value="SULFOTRANSFERASE SULT"/>
    <property type="match status" value="1"/>
</dbReference>
<dbReference type="Pfam" id="PF00685">
    <property type="entry name" value="Sulfotransfer_1"/>
    <property type="match status" value="1"/>
</dbReference>
<dbReference type="SUPFAM" id="SSF52540">
    <property type="entry name" value="P-loop containing nucleoside triphosphate hydrolases"/>
    <property type="match status" value="1"/>
</dbReference>
<sequence length="284" mass="33085">MAESEAETPSTPGEFESKYFEFHGVRLPPFCRGKMEEIANFPVRPSDVWIVTYPKSGTSLLQEVVYLVSQGADPDEIGLMNIDEQLPVLEYPQPGLDIIKELTSPRLIKSHLPYRFLPSDLHNGDSKVIYMARNPKDLVVSYYQFHRSLRTMSYRGTFQEFCRRFMNDKLGYGSWFEHVQEFWEHRMDSNVLFLKYEDMHRDLVTMVEQLARFLGVSCDKAQLEALTEHCHQLVDQCCNAEALPVGRGRVGLWKDIFTVSMNEKFDLVYKQKMGKCDLTFDFYL</sequence>
<evidence type="ECO:0000250" key="1"/>
<evidence type="ECO:0000250" key="2">
    <source>
        <dbReference type="UniProtKB" id="P63047"/>
    </source>
</evidence>
<evidence type="ECO:0000269" key="3">
    <source>
    </source>
</evidence>
<evidence type="ECO:0000269" key="4">
    <source>
    </source>
</evidence>
<evidence type="ECO:0000269" key="5">
    <source>
    </source>
</evidence>
<evidence type="ECO:0000303" key="6">
    <source>
    </source>
</evidence>
<evidence type="ECO:0000303" key="7">
    <source>
    </source>
</evidence>
<evidence type="ECO:0000305" key="8"/>
<evidence type="ECO:0007744" key="9">
    <source>
    </source>
</evidence>
<evidence type="ECO:0007829" key="10">
    <source>
        <dbReference type="PDB" id="1ZD1"/>
    </source>
</evidence>